<name>CWP09_SOLLC</name>
<accession>P80806</accession>
<protein>
    <recommendedName>
        <fullName>44 kDa cell wall protein</fullName>
    </recommendedName>
</protein>
<proteinExistence type="evidence at protein level"/>
<sequence length="14" mass="1401">VAGKSFVPIAAGRQ</sequence>
<dbReference type="InParanoid" id="P80806"/>
<dbReference type="Proteomes" id="UP000004994">
    <property type="component" value="Unplaced"/>
</dbReference>
<dbReference type="GO" id="GO:0005576">
    <property type="term" value="C:extracellular region"/>
    <property type="evidence" value="ECO:0007669"/>
    <property type="project" value="UniProtKB-KW"/>
</dbReference>
<evidence type="ECO:0000269" key="1">
    <source>
    </source>
</evidence>
<evidence type="ECO:0000303" key="2">
    <source>
    </source>
</evidence>
<evidence type="ECO:0000305" key="3"/>
<keyword id="KW-0134">Cell wall</keyword>
<keyword id="KW-0903">Direct protein sequencing</keyword>
<keyword id="KW-1185">Reference proteome</keyword>
<keyword id="KW-0964">Secreted</keyword>
<organism>
    <name type="scientific">Solanum lycopersicum</name>
    <name type="common">Tomato</name>
    <name type="synonym">Lycopersicon esculentum</name>
    <dbReference type="NCBI Taxonomy" id="4081"/>
    <lineage>
        <taxon>Eukaryota</taxon>
        <taxon>Viridiplantae</taxon>
        <taxon>Streptophyta</taxon>
        <taxon>Embryophyta</taxon>
        <taxon>Tracheophyta</taxon>
        <taxon>Spermatophyta</taxon>
        <taxon>Magnoliopsida</taxon>
        <taxon>eudicotyledons</taxon>
        <taxon>Gunneridae</taxon>
        <taxon>Pentapetalae</taxon>
        <taxon>asterids</taxon>
        <taxon>lamiids</taxon>
        <taxon>Solanales</taxon>
        <taxon>Solanaceae</taxon>
        <taxon>Solanoideae</taxon>
        <taxon>Solaneae</taxon>
        <taxon>Solanum</taxon>
        <taxon>Solanum subgen. Lycopersicon</taxon>
    </lineage>
</organism>
<reference evidence="3" key="1">
    <citation type="journal article" date="1997" name="J. Biol. Chem.">
        <title>Differential extraction and protein sequencing reveals major differences in patterns of primary cell wall proteins from plants.</title>
        <authorList>
            <person name="Robertson D."/>
            <person name="Mitchell G.P."/>
            <person name="Gilroy J.S."/>
            <person name="Gerrish C."/>
            <person name="Bolwell G.P."/>
            <person name="Slabas A.R."/>
        </authorList>
    </citation>
    <scope>PROTEIN SEQUENCE</scope>
    <scope>SUBCELLULAR LOCATION</scope>
</reference>
<feature type="chain" id="PRO_0000079655" description="44 kDa cell wall protein">
    <location>
        <begin position="1"/>
        <end position="14" status="greater than"/>
    </location>
</feature>
<feature type="non-terminal residue" evidence="2">
    <location>
        <position position="14"/>
    </location>
</feature>
<comment type="subcellular location">
    <subcellularLocation>
        <location evidence="1">Secreted</location>
        <location evidence="1">Cell wall</location>
    </subcellularLocation>
</comment>